<gene>
    <name type="primary">ptsG</name>
    <name type="ordered locus">SH0521</name>
</gene>
<proteinExistence type="inferred from homology"/>
<organism>
    <name type="scientific">Staphylococcus haemolyticus (strain JCSC1435)</name>
    <dbReference type="NCBI Taxonomy" id="279808"/>
    <lineage>
        <taxon>Bacteria</taxon>
        <taxon>Bacillati</taxon>
        <taxon>Bacillota</taxon>
        <taxon>Bacilli</taxon>
        <taxon>Bacillales</taxon>
        <taxon>Staphylococcaceae</taxon>
        <taxon>Staphylococcus</taxon>
    </lineage>
</organism>
<reference key="1">
    <citation type="journal article" date="2005" name="J. Bacteriol.">
        <title>Whole-genome sequencing of Staphylococcus haemolyticus uncovers the extreme plasticity of its genome and the evolution of human-colonizing staphylococcal species.</title>
        <authorList>
            <person name="Takeuchi F."/>
            <person name="Watanabe S."/>
            <person name="Baba T."/>
            <person name="Yuzawa H."/>
            <person name="Ito T."/>
            <person name="Morimoto Y."/>
            <person name="Kuroda M."/>
            <person name="Cui L."/>
            <person name="Takahashi M."/>
            <person name="Ankai A."/>
            <person name="Baba S."/>
            <person name="Fukui S."/>
            <person name="Lee J.C."/>
            <person name="Hiramatsu K."/>
        </authorList>
    </citation>
    <scope>NUCLEOTIDE SEQUENCE [LARGE SCALE GENOMIC DNA]</scope>
    <source>
        <strain>JCSC1435</strain>
    </source>
</reference>
<evidence type="ECO:0000250" key="1">
    <source>
        <dbReference type="UniProtKB" id="Q57071"/>
    </source>
</evidence>
<evidence type="ECO:0000255" key="2">
    <source>
        <dbReference type="PROSITE-ProRule" id="PRU00416"/>
    </source>
</evidence>
<evidence type="ECO:0000255" key="3">
    <source>
        <dbReference type="PROSITE-ProRule" id="PRU00421"/>
    </source>
</evidence>
<evidence type="ECO:0000255" key="4">
    <source>
        <dbReference type="PROSITE-ProRule" id="PRU00426"/>
    </source>
</evidence>
<evidence type="ECO:0000305" key="5"/>
<accession>Q4L945</accession>
<name>PTG3C_STAHJ</name>
<sequence length="675" mass="73214">MFKKLFGQLQRIGKALMLPVAILPAAGLLLAIGTAFQGEALQQYLPFIKNGVIQNIANMMTGAGGIIFDNLPIIFALGVAIGLAGGDGVAAIAAFVGFIIMNKTMGAFLNVTPAQLEDPSKGFANVLGIPTLQTGVFGGIIIGALAAWCYNKFYNISLPSYLGFFAGKRFVPIMMATTSFILAFPMAWIWPFIQNGLNAFSTGLLDSNTGLAVFLFGFIKRLLIPFGLHHIFHAPFWFEFGSWKNAAGEIIRGDQRIFIEQIREGVHLTSGKFMQGEFPVMMFGLPAAALAIYQTAKPENKKVVGGLMLSAALTSFLTGITEPLEFSFLFVAPLLFFIHAVLDGLSFLTLYLLNLHLGYTFSGGFIDFVLLGILPNKTPWWLVIPVGLVYAVIYYVVFRFLIVKFNFKTPGREDKQASVANTSASKLPFDVLDAMGGKENIKHLDACITRLRVEVNDKSKVDVEGLKALGASGVLEVGNNMQAIFGPKSDQIKHDMARIMNGDITKPSETTVTEDTSDEPVQLEEVKETDIYAPGTGHIIPLSEVPDKVFSEKMMGDGIGFVPEKGGIVAPFDGTVKTIFPTKHAIGLESDTGIEVLIHIGIDTVKLNGEGFESLVDVNEPVTQGQPLMKINLAYLKEHAPSVVTPVIITNQGDKTLTFDDVDSVDPGKRIMTIK</sequence>
<feature type="chain" id="PRO_0000351405" description="PTS system glucose-specific EIICBA component">
    <location>
        <begin position="1"/>
        <end position="675"/>
    </location>
</feature>
<feature type="transmembrane region" description="Helical" evidence="4">
    <location>
        <begin position="16"/>
        <end position="36"/>
    </location>
</feature>
<feature type="transmembrane region" description="Helical" evidence="4">
    <location>
        <begin position="59"/>
        <end position="79"/>
    </location>
</feature>
<feature type="transmembrane region" description="Helical" evidence="4">
    <location>
        <begin position="81"/>
        <end position="101"/>
    </location>
</feature>
<feature type="transmembrane region" description="Helical" evidence="4">
    <location>
        <begin position="126"/>
        <end position="146"/>
    </location>
</feature>
<feature type="transmembrane region" description="Helical" evidence="4">
    <location>
        <begin position="173"/>
        <end position="193"/>
    </location>
</feature>
<feature type="transmembrane region" description="Helical" evidence="4">
    <location>
        <begin position="199"/>
        <end position="219"/>
    </location>
</feature>
<feature type="transmembrane region" description="Helical" evidence="4">
    <location>
        <begin position="273"/>
        <end position="293"/>
    </location>
</feature>
<feature type="transmembrane region" description="Helical" evidence="4">
    <location>
        <begin position="303"/>
        <end position="323"/>
    </location>
</feature>
<feature type="transmembrane region" description="Helical" evidence="4">
    <location>
        <begin position="328"/>
        <end position="348"/>
    </location>
</feature>
<feature type="transmembrane region" description="Helical" evidence="4">
    <location>
        <begin position="355"/>
        <end position="375"/>
    </location>
</feature>
<feature type="transmembrane region" description="Helical" evidence="4">
    <location>
        <begin position="378"/>
        <end position="398"/>
    </location>
</feature>
<feature type="domain" description="PTS EIIC type-1" evidence="4">
    <location>
        <begin position="3"/>
        <end position="414"/>
    </location>
</feature>
<feature type="domain" description="PTS EIIB type-1" evidence="3">
    <location>
        <begin position="425"/>
        <end position="506"/>
    </location>
</feature>
<feature type="domain" description="PTS EIIA type-1" evidence="2">
    <location>
        <begin position="547"/>
        <end position="651"/>
    </location>
</feature>
<feature type="active site" description="Phosphocysteine intermediate; for EIIB activity" evidence="3">
    <location>
        <position position="447"/>
    </location>
</feature>
<feature type="active site" description="Tele-phosphohistidine intermediate; for EIIA activity" evidence="2">
    <location>
        <position position="599"/>
    </location>
</feature>
<protein>
    <recommendedName>
        <fullName evidence="1">PTS system glucose-specific EIICBA component</fullName>
        <ecNumber evidence="1">2.7.1.199</ecNumber>
    </recommendedName>
    <alternativeName>
        <fullName evidence="1">EIICBA-Glc</fullName>
        <shortName evidence="1">EII-Glc</shortName>
    </alternativeName>
    <alternativeName>
        <fullName evidence="5">EIICBA-Glc 1</fullName>
    </alternativeName>
    <domain>
        <recommendedName>
            <fullName evidence="1">Glucose permease IIC component</fullName>
        </recommendedName>
        <alternativeName>
            <fullName evidence="1">PTS system glucose-specific EIIC component</fullName>
        </alternativeName>
    </domain>
    <domain>
        <recommendedName>
            <fullName evidence="1">Glucose-specific phosphotransferase enzyme IIB component</fullName>
        </recommendedName>
        <alternativeName>
            <fullName evidence="1">PTS system glucose-specific EIIB component</fullName>
        </alternativeName>
    </domain>
    <domain>
        <recommendedName>
            <fullName evidence="1">Glucose-specific phosphotransferase enzyme IIA component</fullName>
        </recommendedName>
        <alternativeName>
            <fullName evidence="1">PTS system glucose-specific EIIA component</fullName>
        </alternativeName>
    </domain>
</protein>
<dbReference type="EC" id="2.7.1.199" evidence="1"/>
<dbReference type="EMBL" id="AP006716">
    <property type="protein sequence ID" value="BAE03830.1"/>
    <property type="molecule type" value="Genomic_DNA"/>
</dbReference>
<dbReference type="RefSeq" id="WP_011274846.1">
    <property type="nucleotide sequence ID" value="NC_007168.1"/>
</dbReference>
<dbReference type="SMR" id="Q4L945"/>
<dbReference type="GeneID" id="93779920"/>
<dbReference type="KEGG" id="sha:SH0521"/>
<dbReference type="eggNOG" id="COG1263">
    <property type="taxonomic scope" value="Bacteria"/>
</dbReference>
<dbReference type="eggNOG" id="COG1264">
    <property type="taxonomic scope" value="Bacteria"/>
</dbReference>
<dbReference type="eggNOG" id="COG2190">
    <property type="taxonomic scope" value="Bacteria"/>
</dbReference>
<dbReference type="HOGENOM" id="CLU_012312_1_1_9"/>
<dbReference type="OrthoDB" id="9764327at2"/>
<dbReference type="Proteomes" id="UP000000543">
    <property type="component" value="Chromosome"/>
</dbReference>
<dbReference type="GO" id="GO:0005886">
    <property type="term" value="C:plasma membrane"/>
    <property type="evidence" value="ECO:0007669"/>
    <property type="project" value="UniProtKB-SubCell"/>
</dbReference>
<dbReference type="GO" id="GO:0055056">
    <property type="term" value="F:D-glucose transmembrane transporter activity"/>
    <property type="evidence" value="ECO:0007669"/>
    <property type="project" value="InterPro"/>
</dbReference>
<dbReference type="GO" id="GO:0016301">
    <property type="term" value="F:kinase activity"/>
    <property type="evidence" value="ECO:0007669"/>
    <property type="project" value="UniProtKB-KW"/>
</dbReference>
<dbReference type="GO" id="GO:0008982">
    <property type="term" value="F:protein-N(PI)-phosphohistidine-sugar phosphotransferase activity"/>
    <property type="evidence" value="ECO:0007669"/>
    <property type="project" value="InterPro"/>
</dbReference>
<dbReference type="GO" id="GO:0090563">
    <property type="term" value="F:protein-phosphocysteine-sugar phosphotransferase activity"/>
    <property type="evidence" value="ECO:0007669"/>
    <property type="project" value="TreeGrafter"/>
</dbReference>
<dbReference type="GO" id="GO:1904659">
    <property type="term" value="P:D-glucose transmembrane transport"/>
    <property type="evidence" value="ECO:0007669"/>
    <property type="project" value="InterPro"/>
</dbReference>
<dbReference type="GO" id="GO:0009401">
    <property type="term" value="P:phosphoenolpyruvate-dependent sugar phosphotransferase system"/>
    <property type="evidence" value="ECO:0007669"/>
    <property type="project" value="UniProtKB-KW"/>
</dbReference>
<dbReference type="CDD" id="cd00212">
    <property type="entry name" value="PTS_IIB_glc"/>
    <property type="match status" value="1"/>
</dbReference>
<dbReference type="FunFam" id="2.70.70.10:FF:000001">
    <property type="entry name" value="PTS system glucose-specific IIA component"/>
    <property type="match status" value="1"/>
</dbReference>
<dbReference type="FunFam" id="3.30.1360.60:FF:000001">
    <property type="entry name" value="PTS system glucose-specific IIBC component PtsG"/>
    <property type="match status" value="1"/>
</dbReference>
<dbReference type="Gene3D" id="2.70.70.10">
    <property type="entry name" value="Glucose Permease (Domain IIA)"/>
    <property type="match status" value="1"/>
</dbReference>
<dbReference type="Gene3D" id="3.30.1360.60">
    <property type="entry name" value="Glucose permease domain IIB"/>
    <property type="match status" value="1"/>
</dbReference>
<dbReference type="InterPro" id="IPR011055">
    <property type="entry name" value="Dup_hybrid_motif"/>
</dbReference>
<dbReference type="InterPro" id="IPR036878">
    <property type="entry name" value="Glu_permease_IIB"/>
</dbReference>
<dbReference type="InterPro" id="IPR018113">
    <property type="entry name" value="PTrfase_EIIB_Cys"/>
</dbReference>
<dbReference type="InterPro" id="IPR001127">
    <property type="entry name" value="PTS_EIIA_1_perm"/>
</dbReference>
<dbReference type="InterPro" id="IPR003352">
    <property type="entry name" value="PTS_EIIC"/>
</dbReference>
<dbReference type="InterPro" id="IPR013013">
    <property type="entry name" value="PTS_EIIC_1"/>
</dbReference>
<dbReference type="InterPro" id="IPR050429">
    <property type="entry name" value="PTS_Glucose_EIICBA"/>
</dbReference>
<dbReference type="InterPro" id="IPR001996">
    <property type="entry name" value="PTS_IIB_1"/>
</dbReference>
<dbReference type="InterPro" id="IPR011299">
    <property type="entry name" value="PTS_IIBC_glc"/>
</dbReference>
<dbReference type="NCBIfam" id="TIGR00826">
    <property type="entry name" value="EIIB_glc"/>
    <property type="match status" value="1"/>
</dbReference>
<dbReference type="NCBIfam" id="TIGR00830">
    <property type="entry name" value="PTBA"/>
    <property type="match status" value="1"/>
</dbReference>
<dbReference type="NCBIfam" id="TIGR02002">
    <property type="entry name" value="PTS-II-BC-glcB"/>
    <property type="match status" value="1"/>
</dbReference>
<dbReference type="PANTHER" id="PTHR30009">
    <property type="entry name" value="CYTOCHROME C-TYPE SYNTHESIS PROTEIN AND PTS TRANSMEMBRANE COMPONENT"/>
    <property type="match status" value="1"/>
</dbReference>
<dbReference type="PANTHER" id="PTHR30009:SF20">
    <property type="entry name" value="PTS SYSTEM GLUCOSE-SPECIFIC EIICB COMPONENT-RELATED"/>
    <property type="match status" value="1"/>
</dbReference>
<dbReference type="Pfam" id="PF00358">
    <property type="entry name" value="PTS_EIIA_1"/>
    <property type="match status" value="1"/>
</dbReference>
<dbReference type="Pfam" id="PF00367">
    <property type="entry name" value="PTS_EIIB"/>
    <property type="match status" value="1"/>
</dbReference>
<dbReference type="Pfam" id="PF02378">
    <property type="entry name" value="PTS_EIIC"/>
    <property type="match status" value="1"/>
</dbReference>
<dbReference type="SUPFAM" id="SSF51261">
    <property type="entry name" value="Duplicated hybrid motif"/>
    <property type="match status" value="1"/>
</dbReference>
<dbReference type="SUPFAM" id="SSF55604">
    <property type="entry name" value="Glucose permease domain IIB"/>
    <property type="match status" value="1"/>
</dbReference>
<dbReference type="PROSITE" id="PS51093">
    <property type="entry name" value="PTS_EIIA_TYPE_1"/>
    <property type="match status" value="1"/>
</dbReference>
<dbReference type="PROSITE" id="PS00371">
    <property type="entry name" value="PTS_EIIA_TYPE_1_HIS"/>
    <property type="match status" value="1"/>
</dbReference>
<dbReference type="PROSITE" id="PS51098">
    <property type="entry name" value="PTS_EIIB_TYPE_1"/>
    <property type="match status" value="1"/>
</dbReference>
<dbReference type="PROSITE" id="PS01035">
    <property type="entry name" value="PTS_EIIB_TYPE_1_CYS"/>
    <property type="match status" value="1"/>
</dbReference>
<dbReference type="PROSITE" id="PS51103">
    <property type="entry name" value="PTS_EIIC_TYPE_1"/>
    <property type="match status" value="1"/>
</dbReference>
<keyword id="KW-1003">Cell membrane</keyword>
<keyword id="KW-0418">Kinase</keyword>
<keyword id="KW-0472">Membrane</keyword>
<keyword id="KW-0598">Phosphotransferase system</keyword>
<keyword id="KW-0762">Sugar transport</keyword>
<keyword id="KW-0808">Transferase</keyword>
<keyword id="KW-0812">Transmembrane</keyword>
<keyword id="KW-1133">Transmembrane helix</keyword>
<keyword id="KW-0813">Transport</keyword>
<comment type="function">
    <text evidence="1">The phosphoenolpyruvate-dependent sugar phosphotransferase system (sugar PTS), a major carbohydrate active transport system, catalyzes the phosphorylation of incoming sugar substrates concomitantly with their translocation across the cell membrane. This system is involved in glucose transport.</text>
</comment>
<comment type="catalytic activity">
    <reaction evidence="1">
        <text>N(pros)-phospho-L-histidyl-[protein] + D-glucose(out) = D-glucose 6-phosphate(in) + L-histidyl-[protein]</text>
        <dbReference type="Rhea" id="RHEA:33367"/>
        <dbReference type="Rhea" id="RHEA-COMP:9745"/>
        <dbReference type="Rhea" id="RHEA-COMP:9746"/>
        <dbReference type="ChEBI" id="CHEBI:4167"/>
        <dbReference type="ChEBI" id="CHEBI:29979"/>
        <dbReference type="ChEBI" id="CHEBI:61548"/>
        <dbReference type="ChEBI" id="CHEBI:64837"/>
        <dbReference type="EC" id="2.7.1.199"/>
    </reaction>
</comment>
<comment type="subcellular location">
    <subcellularLocation>
        <location evidence="4">Cell membrane</location>
        <topology evidence="4">Multi-pass membrane protein</topology>
    </subcellularLocation>
</comment>
<comment type="domain">
    <text evidence="4">The EIIC domain forms the PTS system translocation channel and contains the specific substrate-binding site.</text>
</comment>
<comment type="domain">
    <text evidence="3">The EIIB domain is phosphorylated by phospho-EIIA on a cysteinyl or histidyl residue, depending on the transported sugar. Then, it transfers the phosphoryl group to the sugar substrate concomitantly with the sugar uptake processed by the EIIC domain.</text>
</comment>
<comment type="domain">
    <text evidence="2">The EIIA domain is phosphorylated by phospho-HPr on a histidyl residue. Then, it transfers the phosphoryl group to the EIIB domain.</text>
</comment>